<reference key="1">
    <citation type="journal article" date="1997" name="Nature">
        <title>The nucleotide sequence of Saccharomyces cerevisiae chromosome XIII.</title>
        <authorList>
            <person name="Bowman S."/>
            <person name="Churcher C.M."/>
            <person name="Badcock K."/>
            <person name="Brown D."/>
            <person name="Chillingworth T."/>
            <person name="Connor R."/>
            <person name="Dedman K."/>
            <person name="Devlin K."/>
            <person name="Gentles S."/>
            <person name="Hamlin N."/>
            <person name="Hunt S."/>
            <person name="Jagels K."/>
            <person name="Lye G."/>
            <person name="Moule S."/>
            <person name="Odell C."/>
            <person name="Pearson D."/>
            <person name="Rajandream M.A."/>
            <person name="Rice P."/>
            <person name="Skelton J."/>
            <person name="Walsh S.V."/>
            <person name="Whitehead S."/>
            <person name="Barrell B.G."/>
        </authorList>
    </citation>
    <scope>NUCLEOTIDE SEQUENCE [LARGE SCALE GENOMIC DNA]</scope>
    <source>
        <strain>ATCC 204508 / S288c</strain>
    </source>
</reference>
<reference key="2">
    <citation type="journal article" date="2014" name="G3 (Bethesda)">
        <title>The reference genome sequence of Saccharomyces cerevisiae: Then and now.</title>
        <authorList>
            <person name="Engel S.R."/>
            <person name="Dietrich F.S."/>
            <person name="Fisk D.G."/>
            <person name="Binkley G."/>
            <person name="Balakrishnan R."/>
            <person name="Costanzo M.C."/>
            <person name="Dwight S.S."/>
            <person name="Hitz B.C."/>
            <person name="Karra K."/>
            <person name="Nash R.S."/>
            <person name="Weng S."/>
            <person name="Wong E.D."/>
            <person name="Lloyd P."/>
            <person name="Skrzypek M.S."/>
            <person name="Miyasato S.R."/>
            <person name="Simison M."/>
            <person name="Cherry J.M."/>
        </authorList>
    </citation>
    <scope>GENOME REANNOTATION</scope>
    <source>
        <strain>ATCC 204508 / S288c</strain>
    </source>
</reference>
<reference key="3">
    <citation type="journal article" date="2002" name="RNA">
        <title>A conserved family of Saccharomyces cerevisiae synthases effects dihydrouridine modification of tRNA.</title>
        <authorList>
            <person name="Xing F."/>
            <person name="Martzen M.R."/>
            <person name="Phizicky E.M."/>
        </authorList>
    </citation>
    <scope>FUNCTION</scope>
    <scope>CATALYTIC ACTIVITY</scope>
</reference>
<reference key="4">
    <citation type="journal article" date="2003" name="Nature">
        <title>Global analysis of protein expression in yeast.</title>
        <authorList>
            <person name="Ghaemmaghami S."/>
            <person name="Huh W.-K."/>
            <person name="Bower K."/>
            <person name="Howson R.W."/>
            <person name="Belle A."/>
            <person name="Dephoure N."/>
            <person name="O'Shea E.K."/>
            <person name="Weissman J.S."/>
        </authorList>
    </citation>
    <scope>PROTEIN EXPRESSION [LARGE SCALE ANALYSIS]</scope>
</reference>
<reference key="5">
    <citation type="journal article" date="2004" name="J. Biol. Chem.">
        <title>The specificities of four yeast dihydrouridine synthases for cytoplasmic tRNAs.</title>
        <authorList>
            <person name="Xing F."/>
            <person name="Hiley S.L."/>
            <person name="Hughes T.R."/>
            <person name="Phizicky E.M."/>
        </authorList>
    </citation>
    <scope>FUNCTION</scope>
</reference>
<reference key="6">
    <citation type="journal article" date="2012" name="Proc. Natl. Acad. Sci. U.S.A.">
        <title>N-terminal acetylome analyses and functional insights of the N-terminal acetyltransferase NatB.</title>
        <authorList>
            <person name="Van Damme P."/>
            <person name="Lasa M."/>
            <person name="Polevoda B."/>
            <person name="Gazquez C."/>
            <person name="Elosegui-Artola A."/>
            <person name="Kim D.S."/>
            <person name="De Juan-Pardo E."/>
            <person name="Demeyer K."/>
            <person name="Hole K."/>
            <person name="Larrea E."/>
            <person name="Timmerman E."/>
            <person name="Prieto J."/>
            <person name="Arnesen T."/>
            <person name="Sherman F."/>
            <person name="Gevaert K."/>
            <person name="Aldabe R."/>
        </authorList>
    </citation>
    <scope>ACETYLATION [LARGE SCALE ANALYSIS] AT THR-2</scope>
    <scope>CLEAVAGE OF INITIATOR METHIONINE [LARGE SCALE ANALYSIS]</scope>
    <scope>IDENTIFICATION BY MASS SPECTROMETRY [LARGE SCALE ANALYSIS]</scope>
</reference>
<evidence type="ECO:0000250" key="1">
    <source>
        <dbReference type="UniProtKB" id="Q5SMC7"/>
    </source>
</evidence>
<evidence type="ECO:0000250" key="2">
    <source>
        <dbReference type="UniProtKB" id="Q9HGN6"/>
    </source>
</evidence>
<evidence type="ECO:0000256" key="3">
    <source>
        <dbReference type="SAM" id="MobiDB-lite"/>
    </source>
</evidence>
<evidence type="ECO:0000269" key="4">
    <source>
    </source>
</evidence>
<evidence type="ECO:0000269" key="5">
    <source>
    </source>
</evidence>
<evidence type="ECO:0000303" key="6">
    <source>
    </source>
</evidence>
<evidence type="ECO:0000305" key="7"/>
<evidence type="ECO:0000312" key="8">
    <source>
        <dbReference type="SGD" id="S000004545"/>
    </source>
</evidence>
<evidence type="ECO:0007744" key="9">
    <source>
    </source>
</evidence>
<comment type="function">
    <text evidence="2 4 5">Catalyzes the synthesis of dihydrouridine, a modified base found in the D-loop of most tRNAs (PubMed:12003496, PubMed:14970222). Specifically modifies U16 and U17 in cytoplasmic tRNAs (PubMed:12003496, PubMed:14970222). Also able to mediate dihydrouridylation of some mRNAs, thereby affecting their translation (By similarity).</text>
</comment>
<comment type="catalytic activity">
    <reaction evidence="4">
        <text>5,6-dihydrouridine(16) in tRNA + NADP(+) = uridine(16) in tRNA + NADPH + H(+)</text>
        <dbReference type="Rhea" id="RHEA:53376"/>
        <dbReference type="Rhea" id="RHEA-COMP:13543"/>
        <dbReference type="Rhea" id="RHEA-COMP:13544"/>
        <dbReference type="ChEBI" id="CHEBI:15378"/>
        <dbReference type="ChEBI" id="CHEBI:57783"/>
        <dbReference type="ChEBI" id="CHEBI:58349"/>
        <dbReference type="ChEBI" id="CHEBI:65315"/>
        <dbReference type="ChEBI" id="CHEBI:74443"/>
        <dbReference type="EC" id="1.3.1.88"/>
    </reaction>
    <physiologicalReaction direction="right-to-left" evidence="4">
        <dbReference type="Rhea" id="RHEA:53378"/>
    </physiologicalReaction>
</comment>
<comment type="catalytic activity">
    <reaction evidence="4">
        <text>5,6-dihydrouridine(16) in tRNA + NAD(+) = uridine(16) in tRNA + NADH + H(+)</text>
        <dbReference type="Rhea" id="RHEA:53380"/>
        <dbReference type="Rhea" id="RHEA-COMP:13543"/>
        <dbReference type="Rhea" id="RHEA-COMP:13544"/>
        <dbReference type="ChEBI" id="CHEBI:15378"/>
        <dbReference type="ChEBI" id="CHEBI:57540"/>
        <dbReference type="ChEBI" id="CHEBI:57945"/>
        <dbReference type="ChEBI" id="CHEBI:65315"/>
        <dbReference type="ChEBI" id="CHEBI:74443"/>
        <dbReference type="EC" id="1.3.1.88"/>
    </reaction>
    <physiologicalReaction direction="right-to-left" evidence="4">
        <dbReference type="Rhea" id="RHEA:53382"/>
    </physiologicalReaction>
</comment>
<comment type="catalytic activity">
    <reaction evidence="4">
        <text>5,6-dihydrouridine(17) in tRNA + NAD(+) = uridine(17) in tRNA + NADH + H(+)</text>
        <dbReference type="Rhea" id="RHEA:53372"/>
        <dbReference type="Rhea" id="RHEA-COMP:13541"/>
        <dbReference type="Rhea" id="RHEA-COMP:13542"/>
        <dbReference type="ChEBI" id="CHEBI:15378"/>
        <dbReference type="ChEBI" id="CHEBI:57540"/>
        <dbReference type="ChEBI" id="CHEBI:57945"/>
        <dbReference type="ChEBI" id="CHEBI:65315"/>
        <dbReference type="ChEBI" id="CHEBI:74443"/>
        <dbReference type="EC" id="1.3.1.88"/>
    </reaction>
    <physiologicalReaction direction="right-to-left" evidence="4">
        <dbReference type="Rhea" id="RHEA:53374"/>
    </physiologicalReaction>
</comment>
<comment type="catalytic activity">
    <reaction evidence="4">
        <text>5,6-dihydrouridine(17) in tRNA + NADP(+) = uridine(17) in tRNA + NADPH + H(+)</text>
        <dbReference type="Rhea" id="RHEA:53368"/>
        <dbReference type="Rhea" id="RHEA-COMP:13541"/>
        <dbReference type="Rhea" id="RHEA-COMP:13542"/>
        <dbReference type="ChEBI" id="CHEBI:15378"/>
        <dbReference type="ChEBI" id="CHEBI:57783"/>
        <dbReference type="ChEBI" id="CHEBI:58349"/>
        <dbReference type="ChEBI" id="CHEBI:65315"/>
        <dbReference type="ChEBI" id="CHEBI:74443"/>
        <dbReference type="EC" id="1.3.1.88"/>
    </reaction>
    <physiologicalReaction direction="right-to-left" evidence="4">
        <dbReference type="Rhea" id="RHEA:53370"/>
    </physiologicalReaction>
</comment>
<comment type="catalytic activity">
    <reaction evidence="2">
        <text>a 5,6-dihydrouridine in mRNA + NAD(+) = a uridine in mRNA + NADH + H(+)</text>
        <dbReference type="Rhea" id="RHEA:69851"/>
        <dbReference type="Rhea" id="RHEA-COMP:14658"/>
        <dbReference type="Rhea" id="RHEA-COMP:17789"/>
        <dbReference type="ChEBI" id="CHEBI:15378"/>
        <dbReference type="ChEBI" id="CHEBI:57540"/>
        <dbReference type="ChEBI" id="CHEBI:57945"/>
        <dbReference type="ChEBI" id="CHEBI:65315"/>
        <dbReference type="ChEBI" id="CHEBI:74443"/>
    </reaction>
    <physiologicalReaction direction="right-to-left" evidence="2">
        <dbReference type="Rhea" id="RHEA:69853"/>
    </physiologicalReaction>
</comment>
<comment type="catalytic activity">
    <reaction evidence="2">
        <text>a 5,6-dihydrouridine in mRNA + NADP(+) = a uridine in mRNA + NADPH + H(+)</text>
        <dbReference type="Rhea" id="RHEA:69855"/>
        <dbReference type="Rhea" id="RHEA-COMP:14658"/>
        <dbReference type="Rhea" id="RHEA-COMP:17789"/>
        <dbReference type="ChEBI" id="CHEBI:15378"/>
        <dbReference type="ChEBI" id="CHEBI:57783"/>
        <dbReference type="ChEBI" id="CHEBI:58349"/>
        <dbReference type="ChEBI" id="CHEBI:65315"/>
        <dbReference type="ChEBI" id="CHEBI:74443"/>
    </reaction>
    <physiologicalReaction direction="right-to-left" evidence="2">
        <dbReference type="Rhea" id="RHEA:69857"/>
    </physiologicalReaction>
</comment>
<comment type="cofactor">
    <cofactor evidence="1">
        <name>FMN</name>
        <dbReference type="ChEBI" id="CHEBI:58210"/>
    </cofactor>
</comment>
<comment type="subunit">
    <text>Monomer.</text>
</comment>
<comment type="interaction">
    <interactant intactId="EBI-27885">
        <id>P53759</id>
    </interactant>
    <interactant intactId="EBI-16219">
        <id>P39940</id>
        <label>RSP5</label>
    </interactant>
    <organismsDiffer>false</organismsDiffer>
    <experiments>2</experiments>
</comment>
<comment type="similarity">
    <text evidence="7">Belongs to the Dus family. Dus1 subfamily.</text>
</comment>
<accession>P53759</accession>
<accession>D6W0K3</accession>
<sequence length="423" mass="48131">MTEPALSSANNALMQKLTGRQLFDKIGRPTRIVAPMVDQSELAWRILSRRYGATLAYTPMLHAKLFATSKKYREDNWSSLDGSSVDRPLVVQFCANDPEYLLAAAKLVEDKCDAVDLNLGCPQGIAKKGHYGSFLMEEWDLIHNLINTLHKNLKVPVTAKIRIFDDCEKSLNYAKMVLDAGAQFLTVHGRVREQKGQKTGLANWETIKYLRDNLPKETVFFANGNILYPEDISRCMEHIGADAVMSAEGNLYNPGVFNVGQTKNKEKIFPRVDKIIREYFQIVKECQESKASKTAMKSHFFKILRPFLPHHTDIRSTLATMNAKATWEEWEEQVVKPVEKVVQEIFEQPDIAIKDEITIGEKQSWGGSYRTVPYWRCQPYFRPVNGITGDKRVMQGLIDESVNKKRKADVPLESADKKKDVKA</sequence>
<proteinExistence type="evidence at protein level"/>
<name>DUS1_YEAST</name>
<protein>
    <recommendedName>
        <fullName>tRNA-dihydrouridine(16/17) synthase [NAD(P)(+)]</fullName>
        <ecNumber evidence="4">1.3.1.88</ecNumber>
    </recommendedName>
    <alternativeName>
        <fullName evidence="7">mRNA-dihydrouridine synthase DUS1</fullName>
        <ecNumber evidence="2">1.3.1.-</ecNumber>
    </alternativeName>
    <alternativeName>
        <fullName>tRNA-dihydrouridine synthase 1</fullName>
    </alternativeName>
</protein>
<gene>
    <name evidence="6 8" type="primary">DUS1</name>
    <name type="ordered locus">YML080W</name>
</gene>
<feature type="initiator methionine" description="Removed" evidence="9">
    <location>
        <position position="1"/>
    </location>
</feature>
<feature type="chain" id="PRO_0000162153" description="tRNA-dihydrouridine(16/17) synthase [NAD(P)(+)]">
    <location>
        <begin position="2"/>
        <end position="423"/>
    </location>
</feature>
<feature type="region of interest" description="Disordered" evidence="3">
    <location>
        <begin position="404"/>
        <end position="423"/>
    </location>
</feature>
<feature type="compositionally biased region" description="Basic and acidic residues" evidence="3">
    <location>
        <begin position="408"/>
        <end position="423"/>
    </location>
</feature>
<feature type="active site" description="Proton donor" evidence="1">
    <location>
        <position position="121"/>
    </location>
</feature>
<feature type="binding site" evidence="1">
    <location>
        <begin position="35"/>
        <end position="37"/>
    </location>
    <ligand>
        <name>FMN</name>
        <dbReference type="ChEBI" id="CHEBI:58210"/>
    </ligand>
</feature>
<feature type="binding site" evidence="1">
    <location>
        <position position="92"/>
    </location>
    <ligand>
        <name>FMN</name>
        <dbReference type="ChEBI" id="CHEBI:58210"/>
    </ligand>
</feature>
<feature type="binding site" evidence="1">
    <location>
        <position position="160"/>
    </location>
    <ligand>
        <name>FMN</name>
        <dbReference type="ChEBI" id="CHEBI:58210"/>
    </ligand>
</feature>
<feature type="binding site" evidence="1">
    <location>
        <position position="188"/>
    </location>
    <ligand>
        <name>FMN</name>
        <dbReference type="ChEBI" id="CHEBI:58210"/>
    </ligand>
</feature>
<feature type="binding site" evidence="1">
    <location>
        <begin position="223"/>
        <end position="225"/>
    </location>
    <ligand>
        <name>FMN</name>
        <dbReference type="ChEBI" id="CHEBI:58210"/>
    </ligand>
</feature>
<feature type="binding site" evidence="1">
    <location>
        <begin position="247"/>
        <end position="248"/>
    </location>
    <ligand>
        <name>FMN</name>
        <dbReference type="ChEBI" id="CHEBI:58210"/>
    </ligand>
</feature>
<feature type="modified residue" description="N-acetylthreonine" evidence="9">
    <location>
        <position position="2"/>
    </location>
</feature>
<organism>
    <name type="scientific">Saccharomyces cerevisiae (strain ATCC 204508 / S288c)</name>
    <name type="common">Baker's yeast</name>
    <dbReference type="NCBI Taxonomy" id="559292"/>
    <lineage>
        <taxon>Eukaryota</taxon>
        <taxon>Fungi</taxon>
        <taxon>Dikarya</taxon>
        <taxon>Ascomycota</taxon>
        <taxon>Saccharomycotina</taxon>
        <taxon>Saccharomycetes</taxon>
        <taxon>Saccharomycetales</taxon>
        <taxon>Saccharomycetaceae</taxon>
        <taxon>Saccharomyces</taxon>
    </lineage>
</organism>
<keyword id="KW-0007">Acetylation</keyword>
<keyword id="KW-0285">Flavoprotein</keyword>
<keyword id="KW-0288">FMN</keyword>
<keyword id="KW-0507">mRNA processing</keyword>
<keyword id="KW-0520">NAD</keyword>
<keyword id="KW-0521">NADP</keyword>
<keyword id="KW-0560">Oxidoreductase</keyword>
<keyword id="KW-1185">Reference proteome</keyword>
<keyword id="KW-0819">tRNA processing</keyword>
<dbReference type="EC" id="1.3.1.88" evidence="4"/>
<dbReference type="EC" id="1.3.1.-" evidence="2"/>
<dbReference type="EMBL" id="Z46373">
    <property type="protein sequence ID" value="CAA86498.1"/>
    <property type="molecule type" value="Genomic_DNA"/>
</dbReference>
<dbReference type="EMBL" id="BK006946">
    <property type="protein sequence ID" value="DAA09817.1"/>
    <property type="molecule type" value="Genomic_DNA"/>
</dbReference>
<dbReference type="PIR" id="S48817">
    <property type="entry name" value="S48817"/>
</dbReference>
<dbReference type="RefSeq" id="NP_013631.1">
    <property type="nucleotide sequence ID" value="NM_001182439.1"/>
</dbReference>
<dbReference type="SMR" id="P53759"/>
<dbReference type="BioGRID" id="35061">
    <property type="interactions" value="72"/>
</dbReference>
<dbReference type="FunCoup" id="P53759">
    <property type="interactions" value="782"/>
</dbReference>
<dbReference type="IntAct" id="P53759">
    <property type="interactions" value="6"/>
</dbReference>
<dbReference type="STRING" id="4932.YML080W"/>
<dbReference type="iPTMnet" id="P53759"/>
<dbReference type="PaxDb" id="4932-YML080W"/>
<dbReference type="PeptideAtlas" id="P53759"/>
<dbReference type="EnsemblFungi" id="YML080W_mRNA">
    <property type="protein sequence ID" value="YML080W"/>
    <property type="gene ID" value="YML080W"/>
</dbReference>
<dbReference type="GeneID" id="854895"/>
<dbReference type="KEGG" id="sce:YML080W"/>
<dbReference type="AGR" id="SGD:S000004545"/>
<dbReference type="SGD" id="S000004545">
    <property type="gene designation" value="DUS1"/>
</dbReference>
<dbReference type="VEuPathDB" id="FungiDB:YML080W"/>
<dbReference type="eggNOG" id="KOG2335">
    <property type="taxonomic scope" value="Eukaryota"/>
</dbReference>
<dbReference type="GeneTree" id="ENSGT00550000075089"/>
<dbReference type="HOGENOM" id="CLU_013299_5_1_1"/>
<dbReference type="InParanoid" id="P53759"/>
<dbReference type="OMA" id="ISPPVWQ"/>
<dbReference type="OrthoDB" id="272303at2759"/>
<dbReference type="BioCyc" id="MetaCyc:G3O-32671-MONOMER"/>
<dbReference type="BioCyc" id="YEAST:G3O-32671-MONOMER"/>
<dbReference type="BRENDA" id="1.3.1.88">
    <property type="organism ID" value="984"/>
</dbReference>
<dbReference type="BioGRID-ORCS" id="854895">
    <property type="hits" value="0 hits in 10 CRISPR screens"/>
</dbReference>
<dbReference type="PRO" id="PR:P53759"/>
<dbReference type="Proteomes" id="UP000002311">
    <property type="component" value="Chromosome XIII"/>
</dbReference>
<dbReference type="RNAct" id="P53759">
    <property type="molecule type" value="protein"/>
</dbReference>
<dbReference type="GO" id="GO:0005634">
    <property type="term" value="C:nucleus"/>
    <property type="evidence" value="ECO:0007005"/>
    <property type="project" value="SGD"/>
</dbReference>
<dbReference type="GO" id="GO:0050660">
    <property type="term" value="F:flavin adenine dinucleotide binding"/>
    <property type="evidence" value="ECO:0007669"/>
    <property type="project" value="InterPro"/>
</dbReference>
<dbReference type="GO" id="GO:0106414">
    <property type="term" value="F:mRNA dihydrouridine synthase activity"/>
    <property type="evidence" value="ECO:0007669"/>
    <property type="project" value="RHEA"/>
</dbReference>
<dbReference type="GO" id="GO:0017150">
    <property type="term" value="F:tRNA dihydrouridine synthase activity"/>
    <property type="evidence" value="ECO:0000314"/>
    <property type="project" value="SGD"/>
</dbReference>
<dbReference type="GO" id="GO:0102262">
    <property type="term" value="F:tRNA-dihydrouridine16 synthase activity"/>
    <property type="evidence" value="ECO:0000315"/>
    <property type="project" value="FlyBase"/>
</dbReference>
<dbReference type="GO" id="GO:0102263">
    <property type="term" value="F:tRNA-dihydrouridine17 synthase activity"/>
    <property type="evidence" value="ECO:0000315"/>
    <property type="project" value="FlyBase"/>
</dbReference>
<dbReference type="GO" id="GO:0006397">
    <property type="term" value="P:mRNA processing"/>
    <property type="evidence" value="ECO:0007669"/>
    <property type="project" value="UniProtKB-KW"/>
</dbReference>
<dbReference type="GO" id="GO:0006400">
    <property type="term" value="P:tRNA modification"/>
    <property type="evidence" value="ECO:0000314"/>
    <property type="project" value="SGD"/>
</dbReference>
<dbReference type="CDD" id="cd02801">
    <property type="entry name" value="DUS_like_FMN"/>
    <property type="match status" value="1"/>
</dbReference>
<dbReference type="FunFam" id="3.20.20.70:FF:000234">
    <property type="entry name" value="DUS1p Dihydrouridine synthase"/>
    <property type="match status" value="1"/>
</dbReference>
<dbReference type="Gene3D" id="3.20.20.70">
    <property type="entry name" value="Aldolase class I"/>
    <property type="match status" value="1"/>
</dbReference>
<dbReference type="InterPro" id="IPR013785">
    <property type="entry name" value="Aldolase_TIM"/>
</dbReference>
<dbReference type="InterPro" id="IPR035587">
    <property type="entry name" value="DUS-like_FMN-bd"/>
</dbReference>
<dbReference type="InterPro" id="IPR018517">
    <property type="entry name" value="tRNA_hU_synthase_CS"/>
</dbReference>
<dbReference type="PANTHER" id="PTHR11082">
    <property type="entry name" value="TRNA-DIHYDROURIDINE SYNTHASE"/>
    <property type="match status" value="1"/>
</dbReference>
<dbReference type="PANTHER" id="PTHR11082:SF5">
    <property type="entry name" value="TRNA-DIHYDROURIDINE(16_17) SYNTHASE [NAD(P)(+)]-LIKE"/>
    <property type="match status" value="1"/>
</dbReference>
<dbReference type="Pfam" id="PF01207">
    <property type="entry name" value="Dus"/>
    <property type="match status" value="1"/>
</dbReference>
<dbReference type="SUPFAM" id="SSF51395">
    <property type="entry name" value="FMN-linked oxidoreductases"/>
    <property type="match status" value="1"/>
</dbReference>
<dbReference type="PROSITE" id="PS01136">
    <property type="entry name" value="UPF0034"/>
    <property type="match status" value="1"/>
</dbReference>